<accession>C1F467</accession>
<name>MRAZ_ACIC5</name>
<proteinExistence type="inferred from homology"/>
<protein>
    <recommendedName>
        <fullName>Transcriptional regulator MraZ</fullName>
    </recommendedName>
</protein>
<keyword id="KW-0963">Cytoplasm</keyword>
<keyword id="KW-0238">DNA-binding</keyword>
<keyword id="KW-1185">Reference proteome</keyword>
<keyword id="KW-0677">Repeat</keyword>
<keyword id="KW-0804">Transcription</keyword>
<keyword id="KW-0805">Transcription regulation</keyword>
<sequence>MFRGNHPTRVDEKGRLKLPADFKRRIDEQYGSQFFITSKDGKVAEIYPLQEWEKVEQKLAQIPNMNPAKKKFLDRVNYYGQMVEMDAQGRVLLPQILRESAQVTGDVVVFGMQSYLEVANHEAFKQNMELNPMTAEDEQALAEFGL</sequence>
<gene>
    <name evidence="1" type="primary">mraZ</name>
    <name type="ordered locus">ACP_1095</name>
</gene>
<dbReference type="EMBL" id="CP001472">
    <property type="protein sequence ID" value="ACO34155.1"/>
    <property type="molecule type" value="Genomic_DNA"/>
</dbReference>
<dbReference type="RefSeq" id="WP_015896253.1">
    <property type="nucleotide sequence ID" value="NC_012483.1"/>
</dbReference>
<dbReference type="SMR" id="C1F467"/>
<dbReference type="FunCoup" id="C1F467">
    <property type="interactions" value="206"/>
</dbReference>
<dbReference type="STRING" id="240015.ACP_1095"/>
<dbReference type="KEGG" id="aca:ACP_1095"/>
<dbReference type="eggNOG" id="COG2001">
    <property type="taxonomic scope" value="Bacteria"/>
</dbReference>
<dbReference type="HOGENOM" id="CLU_107907_2_2_0"/>
<dbReference type="InParanoid" id="C1F467"/>
<dbReference type="OrthoDB" id="9807753at2"/>
<dbReference type="Proteomes" id="UP000002207">
    <property type="component" value="Chromosome"/>
</dbReference>
<dbReference type="GO" id="GO:0005737">
    <property type="term" value="C:cytoplasm"/>
    <property type="evidence" value="ECO:0007669"/>
    <property type="project" value="UniProtKB-UniRule"/>
</dbReference>
<dbReference type="GO" id="GO:0009295">
    <property type="term" value="C:nucleoid"/>
    <property type="evidence" value="ECO:0007669"/>
    <property type="project" value="UniProtKB-SubCell"/>
</dbReference>
<dbReference type="GO" id="GO:0003700">
    <property type="term" value="F:DNA-binding transcription factor activity"/>
    <property type="evidence" value="ECO:0007669"/>
    <property type="project" value="UniProtKB-UniRule"/>
</dbReference>
<dbReference type="GO" id="GO:0000976">
    <property type="term" value="F:transcription cis-regulatory region binding"/>
    <property type="evidence" value="ECO:0007669"/>
    <property type="project" value="TreeGrafter"/>
</dbReference>
<dbReference type="GO" id="GO:2000143">
    <property type="term" value="P:negative regulation of DNA-templated transcription initiation"/>
    <property type="evidence" value="ECO:0007669"/>
    <property type="project" value="TreeGrafter"/>
</dbReference>
<dbReference type="CDD" id="cd16321">
    <property type="entry name" value="MraZ_C"/>
    <property type="match status" value="1"/>
</dbReference>
<dbReference type="CDD" id="cd16320">
    <property type="entry name" value="MraZ_N"/>
    <property type="match status" value="1"/>
</dbReference>
<dbReference type="Gene3D" id="3.40.1550.20">
    <property type="entry name" value="Transcriptional regulator MraZ domain"/>
    <property type="match status" value="1"/>
</dbReference>
<dbReference type="HAMAP" id="MF_01008">
    <property type="entry name" value="MraZ"/>
    <property type="match status" value="1"/>
</dbReference>
<dbReference type="InterPro" id="IPR003444">
    <property type="entry name" value="MraZ"/>
</dbReference>
<dbReference type="InterPro" id="IPR035644">
    <property type="entry name" value="MraZ_C"/>
</dbReference>
<dbReference type="InterPro" id="IPR020603">
    <property type="entry name" value="MraZ_dom"/>
</dbReference>
<dbReference type="InterPro" id="IPR035642">
    <property type="entry name" value="MraZ_N"/>
</dbReference>
<dbReference type="InterPro" id="IPR038619">
    <property type="entry name" value="MraZ_sf"/>
</dbReference>
<dbReference type="InterPro" id="IPR007159">
    <property type="entry name" value="SpoVT-AbrB_dom"/>
</dbReference>
<dbReference type="InterPro" id="IPR037914">
    <property type="entry name" value="SpoVT-AbrB_sf"/>
</dbReference>
<dbReference type="PANTHER" id="PTHR34701">
    <property type="entry name" value="TRANSCRIPTIONAL REGULATOR MRAZ"/>
    <property type="match status" value="1"/>
</dbReference>
<dbReference type="PANTHER" id="PTHR34701:SF1">
    <property type="entry name" value="TRANSCRIPTIONAL REGULATOR MRAZ"/>
    <property type="match status" value="1"/>
</dbReference>
<dbReference type="Pfam" id="PF02381">
    <property type="entry name" value="MraZ"/>
    <property type="match status" value="2"/>
</dbReference>
<dbReference type="SUPFAM" id="SSF89447">
    <property type="entry name" value="AbrB/MazE/MraZ-like"/>
    <property type="match status" value="1"/>
</dbReference>
<dbReference type="PROSITE" id="PS51740">
    <property type="entry name" value="SPOVT_ABRB"/>
    <property type="match status" value="2"/>
</dbReference>
<evidence type="ECO:0000255" key="1">
    <source>
        <dbReference type="HAMAP-Rule" id="MF_01008"/>
    </source>
</evidence>
<evidence type="ECO:0000255" key="2">
    <source>
        <dbReference type="PROSITE-ProRule" id="PRU01076"/>
    </source>
</evidence>
<feature type="chain" id="PRO_1000148843" description="Transcriptional regulator MraZ">
    <location>
        <begin position="1"/>
        <end position="146"/>
    </location>
</feature>
<feature type="domain" description="SpoVT-AbrB 1" evidence="2">
    <location>
        <begin position="5"/>
        <end position="51"/>
    </location>
</feature>
<feature type="domain" description="SpoVT-AbrB 2" evidence="2">
    <location>
        <begin position="80"/>
        <end position="123"/>
    </location>
</feature>
<organism>
    <name type="scientific">Acidobacterium capsulatum (strain ATCC 51196 / DSM 11244 / BCRC 80197 / JCM 7670 / NBRC 15755 / NCIMB 13165 / 161)</name>
    <dbReference type="NCBI Taxonomy" id="240015"/>
    <lineage>
        <taxon>Bacteria</taxon>
        <taxon>Pseudomonadati</taxon>
        <taxon>Acidobacteriota</taxon>
        <taxon>Terriglobia</taxon>
        <taxon>Terriglobales</taxon>
        <taxon>Acidobacteriaceae</taxon>
        <taxon>Acidobacterium</taxon>
    </lineage>
</organism>
<reference key="1">
    <citation type="journal article" date="2009" name="Appl. Environ. Microbiol.">
        <title>Three genomes from the phylum Acidobacteria provide insight into the lifestyles of these microorganisms in soils.</title>
        <authorList>
            <person name="Ward N.L."/>
            <person name="Challacombe J.F."/>
            <person name="Janssen P.H."/>
            <person name="Henrissat B."/>
            <person name="Coutinho P.M."/>
            <person name="Wu M."/>
            <person name="Xie G."/>
            <person name="Haft D.H."/>
            <person name="Sait M."/>
            <person name="Badger J."/>
            <person name="Barabote R.D."/>
            <person name="Bradley B."/>
            <person name="Brettin T.S."/>
            <person name="Brinkac L.M."/>
            <person name="Bruce D."/>
            <person name="Creasy T."/>
            <person name="Daugherty S.C."/>
            <person name="Davidsen T.M."/>
            <person name="DeBoy R.T."/>
            <person name="Detter J.C."/>
            <person name="Dodson R.J."/>
            <person name="Durkin A.S."/>
            <person name="Ganapathy A."/>
            <person name="Gwinn-Giglio M."/>
            <person name="Han C.S."/>
            <person name="Khouri H."/>
            <person name="Kiss H."/>
            <person name="Kothari S.P."/>
            <person name="Madupu R."/>
            <person name="Nelson K.E."/>
            <person name="Nelson W.C."/>
            <person name="Paulsen I."/>
            <person name="Penn K."/>
            <person name="Ren Q."/>
            <person name="Rosovitz M.J."/>
            <person name="Selengut J.D."/>
            <person name="Shrivastava S."/>
            <person name="Sullivan S.A."/>
            <person name="Tapia R."/>
            <person name="Thompson L.S."/>
            <person name="Watkins K.L."/>
            <person name="Yang Q."/>
            <person name="Yu C."/>
            <person name="Zafar N."/>
            <person name="Zhou L."/>
            <person name="Kuske C.R."/>
        </authorList>
    </citation>
    <scope>NUCLEOTIDE SEQUENCE [LARGE SCALE GENOMIC DNA]</scope>
    <source>
        <strain>ATCC 51196 / DSM 11244 / BCRC 80197 / JCM 7670 / NBRC 15755 / NCIMB 13165 / 161</strain>
    </source>
</reference>
<comment type="subunit">
    <text evidence="1">Forms oligomers.</text>
</comment>
<comment type="subcellular location">
    <subcellularLocation>
        <location evidence="1">Cytoplasm</location>
        <location evidence="1">Nucleoid</location>
    </subcellularLocation>
</comment>
<comment type="similarity">
    <text evidence="1">Belongs to the MraZ family.</text>
</comment>